<reference key="1">
    <citation type="submission" date="2008-03" db="EMBL/GenBank/DDBJ databases">
        <title>Complete sequence of chromosome of Methylobacterium radiotolerans JCM 2831.</title>
        <authorList>
            <consortium name="US DOE Joint Genome Institute"/>
            <person name="Copeland A."/>
            <person name="Lucas S."/>
            <person name="Lapidus A."/>
            <person name="Glavina del Rio T."/>
            <person name="Dalin E."/>
            <person name="Tice H."/>
            <person name="Bruce D."/>
            <person name="Goodwin L."/>
            <person name="Pitluck S."/>
            <person name="Kiss H."/>
            <person name="Brettin T."/>
            <person name="Detter J.C."/>
            <person name="Han C."/>
            <person name="Kuske C.R."/>
            <person name="Schmutz J."/>
            <person name="Larimer F."/>
            <person name="Land M."/>
            <person name="Hauser L."/>
            <person name="Kyrpides N."/>
            <person name="Mikhailova N."/>
            <person name="Marx C.J."/>
            <person name="Richardson P."/>
        </authorList>
    </citation>
    <scope>NUCLEOTIDE SEQUENCE [LARGE SCALE GENOMIC DNA]</scope>
    <source>
        <strain>ATCC 27329 / DSM 1819 / JCM 2831 / NBRC 15690 / NCIMB 10815 / 0-1</strain>
    </source>
</reference>
<evidence type="ECO:0000255" key="1">
    <source>
        <dbReference type="HAMAP-Rule" id="MF_00539"/>
    </source>
</evidence>
<evidence type="ECO:0000256" key="2">
    <source>
        <dbReference type="SAM" id="MobiDB-lite"/>
    </source>
</evidence>
<evidence type="ECO:0000305" key="3"/>
<keyword id="KW-0687">Ribonucleoprotein</keyword>
<keyword id="KW-0689">Ribosomal protein</keyword>
<protein>
    <recommendedName>
        <fullName evidence="1">Large ribosomal subunit protein bL27</fullName>
    </recommendedName>
    <alternativeName>
        <fullName evidence="3">50S ribosomal protein L27</fullName>
    </alternativeName>
</protein>
<name>RL27_METRJ</name>
<sequence>MAHKKAGGSSRNGRDSEGRRLGVKKFGSEAVIPGNIIVRQRGTKWHPGANVGMGKDHTIFALVPGHVRFETRRGRAFVGVTPLAEAAE</sequence>
<accession>B1M699</accession>
<feature type="chain" id="PRO_1000128772" description="Large ribosomal subunit protein bL27">
    <location>
        <begin position="1"/>
        <end position="88"/>
    </location>
</feature>
<feature type="region of interest" description="Disordered" evidence="2">
    <location>
        <begin position="1"/>
        <end position="24"/>
    </location>
</feature>
<comment type="similarity">
    <text evidence="1">Belongs to the bacterial ribosomal protein bL27 family.</text>
</comment>
<organism>
    <name type="scientific">Methylobacterium radiotolerans (strain ATCC 27329 / DSM 1819 / JCM 2831 / NBRC 15690 / NCIMB 10815 / 0-1)</name>
    <dbReference type="NCBI Taxonomy" id="426355"/>
    <lineage>
        <taxon>Bacteria</taxon>
        <taxon>Pseudomonadati</taxon>
        <taxon>Pseudomonadota</taxon>
        <taxon>Alphaproteobacteria</taxon>
        <taxon>Hyphomicrobiales</taxon>
        <taxon>Methylobacteriaceae</taxon>
        <taxon>Methylobacterium</taxon>
    </lineage>
</organism>
<dbReference type="EMBL" id="CP001001">
    <property type="protein sequence ID" value="ACB22134.1"/>
    <property type="molecule type" value="Genomic_DNA"/>
</dbReference>
<dbReference type="RefSeq" id="WP_012317134.1">
    <property type="nucleotide sequence ID" value="NC_010505.1"/>
</dbReference>
<dbReference type="SMR" id="B1M699"/>
<dbReference type="STRING" id="426355.Mrad2831_0107"/>
<dbReference type="GeneID" id="6136407"/>
<dbReference type="KEGG" id="mrd:Mrad2831_0107"/>
<dbReference type="eggNOG" id="COG0211">
    <property type="taxonomic scope" value="Bacteria"/>
</dbReference>
<dbReference type="HOGENOM" id="CLU_095424_4_1_5"/>
<dbReference type="OrthoDB" id="9803474at2"/>
<dbReference type="Proteomes" id="UP000006589">
    <property type="component" value="Chromosome"/>
</dbReference>
<dbReference type="GO" id="GO:0022625">
    <property type="term" value="C:cytosolic large ribosomal subunit"/>
    <property type="evidence" value="ECO:0007669"/>
    <property type="project" value="TreeGrafter"/>
</dbReference>
<dbReference type="GO" id="GO:0003735">
    <property type="term" value="F:structural constituent of ribosome"/>
    <property type="evidence" value="ECO:0007669"/>
    <property type="project" value="InterPro"/>
</dbReference>
<dbReference type="GO" id="GO:0006412">
    <property type="term" value="P:translation"/>
    <property type="evidence" value="ECO:0007669"/>
    <property type="project" value="UniProtKB-UniRule"/>
</dbReference>
<dbReference type="FunFam" id="2.40.50.100:FF:000020">
    <property type="entry name" value="50S ribosomal protein L27"/>
    <property type="match status" value="1"/>
</dbReference>
<dbReference type="Gene3D" id="2.40.50.100">
    <property type="match status" value="1"/>
</dbReference>
<dbReference type="HAMAP" id="MF_00539">
    <property type="entry name" value="Ribosomal_bL27"/>
    <property type="match status" value="1"/>
</dbReference>
<dbReference type="InterPro" id="IPR001684">
    <property type="entry name" value="Ribosomal_bL27"/>
</dbReference>
<dbReference type="InterPro" id="IPR018261">
    <property type="entry name" value="Ribosomal_bL27_CS"/>
</dbReference>
<dbReference type="NCBIfam" id="TIGR00062">
    <property type="entry name" value="L27"/>
    <property type="match status" value="1"/>
</dbReference>
<dbReference type="PANTHER" id="PTHR15893:SF0">
    <property type="entry name" value="LARGE RIBOSOMAL SUBUNIT PROTEIN BL27M"/>
    <property type="match status" value="1"/>
</dbReference>
<dbReference type="PANTHER" id="PTHR15893">
    <property type="entry name" value="RIBOSOMAL PROTEIN L27"/>
    <property type="match status" value="1"/>
</dbReference>
<dbReference type="Pfam" id="PF01016">
    <property type="entry name" value="Ribosomal_L27"/>
    <property type="match status" value="1"/>
</dbReference>
<dbReference type="PRINTS" id="PR00063">
    <property type="entry name" value="RIBOSOMALL27"/>
</dbReference>
<dbReference type="SUPFAM" id="SSF110324">
    <property type="entry name" value="Ribosomal L27 protein-like"/>
    <property type="match status" value="1"/>
</dbReference>
<dbReference type="PROSITE" id="PS00831">
    <property type="entry name" value="RIBOSOMAL_L27"/>
    <property type="match status" value="1"/>
</dbReference>
<proteinExistence type="inferred from homology"/>
<gene>
    <name evidence="1" type="primary">rpmA</name>
    <name type="ordered locus">Mrad2831_0107</name>
</gene>